<organism>
    <name type="scientific">Mycobacterium tuberculosis (strain ATCC 25618 / H37Rv)</name>
    <dbReference type="NCBI Taxonomy" id="83332"/>
    <lineage>
        <taxon>Bacteria</taxon>
        <taxon>Bacillati</taxon>
        <taxon>Actinomycetota</taxon>
        <taxon>Actinomycetes</taxon>
        <taxon>Mycobacteriales</taxon>
        <taxon>Mycobacteriaceae</taxon>
        <taxon>Mycobacterium</taxon>
        <taxon>Mycobacterium tuberculosis complex</taxon>
    </lineage>
</organism>
<evidence type="ECO:0000255" key="1">
    <source>
        <dbReference type="HAMAP-Rule" id="MF_01928"/>
    </source>
</evidence>
<evidence type="ECO:0000256" key="2">
    <source>
        <dbReference type="SAM" id="MobiDB-lite"/>
    </source>
</evidence>
<evidence type="ECO:0000269" key="3">
    <source>
    </source>
</evidence>
<name>PURK_MYCTU</name>
<feature type="chain" id="PRO_0000075000" description="N5-carboxyaminoimidazole ribonucleotide synthase">
    <location>
        <begin position="1"/>
        <end position="429"/>
    </location>
</feature>
<feature type="domain" description="ATP-grasp" evidence="1">
    <location>
        <begin position="121"/>
        <end position="310"/>
    </location>
</feature>
<feature type="region of interest" description="Disordered" evidence="2">
    <location>
        <begin position="406"/>
        <end position="429"/>
    </location>
</feature>
<feature type="binding site" evidence="1">
    <location>
        <position position="117"/>
    </location>
    <ligand>
        <name>ATP</name>
        <dbReference type="ChEBI" id="CHEBI:30616"/>
    </ligand>
</feature>
<feature type="binding site" evidence="1">
    <location>
        <position position="157"/>
    </location>
    <ligand>
        <name>ATP</name>
        <dbReference type="ChEBI" id="CHEBI:30616"/>
    </ligand>
</feature>
<feature type="binding site" evidence="1">
    <location>
        <begin position="194"/>
        <end position="197"/>
    </location>
    <ligand>
        <name>ATP</name>
        <dbReference type="ChEBI" id="CHEBI:30616"/>
    </ligand>
</feature>
<feature type="binding site" evidence="1">
    <location>
        <position position="202"/>
    </location>
    <ligand>
        <name>ATP</name>
        <dbReference type="ChEBI" id="CHEBI:30616"/>
    </ligand>
</feature>
<feature type="binding site" evidence="1">
    <location>
        <begin position="280"/>
        <end position="281"/>
    </location>
    <ligand>
        <name>ATP</name>
        <dbReference type="ChEBI" id="CHEBI:30616"/>
    </ligand>
</feature>
<dbReference type="EC" id="6.3.4.18" evidence="1"/>
<dbReference type="EMBL" id="AL123456">
    <property type="protein sequence ID" value="CCP46095.1"/>
    <property type="molecule type" value="Genomic_DNA"/>
</dbReference>
<dbReference type="PIR" id="E70979">
    <property type="entry name" value="E70979"/>
</dbReference>
<dbReference type="RefSeq" id="NP_217793.1">
    <property type="nucleotide sequence ID" value="NC_000962.3"/>
</dbReference>
<dbReference type="RefSeq" id="WP_003417126.1">
    <property type="nucleotide sequence ID" value="NZ_NVQJ01000003.1"/>
</dbReference>
<dbReference type="SMR" id="P9WHL9"/>
<dbReference type="FunCoup" id="P9WHL9">
    <property type="interactions" value="152"/>
</dbReference>
<dbReference type="STRING" id="83332.Rv3276c"/>
<dbReference type="PaxDb" id="83332-Rv3276c"/>
<dbReference type="DNASU" id="888720"/>
<dbReference type="GeneID" id="888720"/>
<dbReference type="KEGG" id="mtu:Rv3276c"/>
<dbReference type="KEGG" id="mtv:RVBD_3276c"/>
<dbReference type="TubercuList" id="Rv3276c"/>
<dbReference type="eggNOG" id="COG0026">
    <property type="taxonomic scope" value="Bacteria"/>
</dbReference>
<dbReference type="InParanoid" id="P9WHL9"/>
<dbReference type="OrthoDB" id="9804625at2"/>
<dbReference type="PhylomeDB" id="P9WHL9"/>
<dbReference type="UniPathway" id="UPA00074">
    <property type="reaction ID" value="UER00942"/>
</dbReference>
<dbReference type="Proteomes" id="UP000001584">
    <property type="component" value="Chromosome"/>
</dbReference>
<dbReference type="GO" id="GO:0005829">
    <property type="term" value="C:cytosol"/>
    <property type="evidence" value="ECO:0000318"/>
    <property type="project" value="GO_Central"/>
</dbReference>
<dbReference type="GO" id="GO:0005886">
    <property type="term" value="C:plasma membrane"/>
    <property type="evidence" value="ECO:0007005"/>
    <property type="project" value="MTBBASE"/>
</dbReference>
<dbReference type="GO" id="GO:0034028">
    <property type="term" value="F:5-(carboxyamino)imidazole ribonucleotide synthase activity"/>
    <property type="evidence" value="ECO:0007669"/>
    <property type="project" value="UniProtKB-UniRule"/>
</dbReference>
<dbReference type="GO" id="GO:0005524">
    <property type="term" value="F:ATP binding"/>
    <property type="evidence" value="ECO:0007669"/>
    <property type="project" value="UniProtKB-KW"/>
</dbReference>
<dbReference type="GO" id="GO:0046872">
    <property type="term" value="F:metal ion binding"/>
    <property type="evidence" value="ECO:0007669"/>
    <property type="project" value="InterPro"/>
</dbReference>
<dbReference type="GO" id="GO:0004638">
    <property type="term" value="F:phosphoribosylaminoimidazole carboxylase activity"/>
    <property type="evidence" value="ECO:0007669"/>
    <property type="project" value="InterPro"/>
</dbReference>
<dbReference type="GO" id="GO:0006189">
    <property type="term" value="P:'de novo' IMP biosynthetic process"/>
    <property type="evidence" value="ECO:0007669"/>
    <property type="project" value="UniProtKB-UniRule"/>
</dbReference>
<dbReference type="FunFam" id="3.30.1490.20:FF:000015">
    <property type="entry name" value="N5-carboxyaminoimidazole ribonucleotide synthase"/>
    <property type="match status" value="1"/>
</dbReference>
<dbReference type="FunFam" id="3.30.470.20:FF:000029">
    <property type="entry name" value="N5-carboxyaminoimidazole ribonucleotide synthase"/>
    <property type="match status" value="1"/>
</dbReference>
<dbReference type="FunFam" id="3.40.50.20:FF:000025">
    <property type="entry name" value="N5-carboxyaminoimidazole ribonucleotide synthase"/>
    <property type="match status" value="1"/>
</dbReference>
<dbReference type="Gene3D" id="3.40.50.20">
    <property type="match status" value="1"/>
</dbReference>
<dbReference type="Gene3D" id="3.30.1490.20">
    <property type="entry name" value="ATP-grasp fold, A domain"/>
    <property type="match status" value="1"/>
</dbReference>
<dbReference type="Gene3D" id="3.30.470.20">
    <property type="entry name" value="ATP-grasp fold, B domain"/>
    <property type="match status" value="1"/>
</dbReference>
<dbReference type="HAMAP" id="MF_01928">
    <property type="entry name" value="PurK"/>
    <property type="match status" value="1"/>
</dbReference>
<dbReference type="InterPro" id="IPR011761">
    <property type="entry name" value="ATP-grasp"/>
</dbReference>
<dbReference type="InterPro" id="IPR003135">
    <property type="entry name" value="ATP-grasp_carboxylate-amine"/>
</dbReference>
<dbReference type="InterPro" id="IPR013815">
    <property type="entry name" value="ATP_grasp_subdomain_1"/>
</dbReference>
<dbReference type="InterPro" id="IPR016185">
    <property type="entry name" value="PreATP-grasp_dom_sf"/>
</dbReference>
<dbReference type="InterPro" id="IPR005875">
    <property type="entry name" value="PurK"/>
</dbReference>
<dbReference type="InterPro" id="IPR040686">
    <property type="entry name" value="PurK_C"/>
</dbReference>
<dbReference type="InterPro" id="IPR054350">
    <property type="entry name" value="PurT/PurK_preATP-grasp"/>
</dbReference>
<dbReference type="InterPro" id="IPR011054">
    <property type="entry name" value="Rudment_hybrid_motif"/>
</dbReference>
<dbReference type="NCBIfam" id="NF004679">
    <property type="entry name" value="PRK06019.1-5"/>
    <property type="match status" value="1"/>
</dbReference>
<dbReference type="NCBIfam" id="NF004680">
    <property type="entry name" value="PRK06019.1-6"/>
    <property type="match status" value="1"/>
</dbReference>
<dbReference type="NCBIfam" id="TIGR01161">
    <property type="entry name" value="purK"/>
    <property type="match status" value="1"/>
</dbReference>
<dbReference type="PANTHER" id="PTHR11609:SF5">
    <property type="entry name" value="PHOSPHORIBOSYLAMINOIMIDAZOLE CARBOXYLASE"/>
    <property type="match status" value="1"/>
</dbReference>
<dbReference type="PANTHER" id="PTHR11609">
    <property type="entry name" value="PURINE BIOSYNTHESIS PROTEIN 6/7, PUR6/7"/>
    <property type="match status" value="1"/>
</dbReference>
<dbReference type="Pfam" id="PF02222">
    <property type="entry name" value="ATP-grasp"/>
    <property type="match status" value="1"/>
</dbReference>
<dbReference type="Pfam" id="PF17769">
    <property type="entry name" value="PurK_C"/>
    <property type="match status" value="1"/>
</dbReference>
<dbReference type="Pfam" id="PF22660">
    <property type="entry name" value="RS_preATP-grasp-like"/>
    <property type="match status" value="1"/>
</dbReference>
<dbReference type="SMART" id="SM01209">
    <property type="entry name" value="GARS_A"/>
    <property type="match status" value="1"/>
</dbReference>
<dbReference type="SUPFAM" id="SSF56059">
    <property type="entry name" value="Glutathione synthetase ATP-binding domain-like"/>
    <property type="match status" value="1"/>
</dbReference>
<dbReference type="SUPFAM" id="SSF52440">
    <property type="entry name" value="PreATP-grasp domain"/>
    <property type="match status" value="1"/>
</dbReference>
<dbReference type="SUPFAM" id="SSF51246">
    <property type="entry name" value="Rudiment single hybrid motif"/>
    <property type="match status" value="1"/>
</dbReference>
<dbReference type="PROSITE" id="PS50975">
    <property type="entry name" value="ATP_GRASP"/>
    <property type="match status" value="1"/>
</dbReference>
<comment type="function">
    <text evidence="1">Catalyzes the ATP-dependent conversion of 5-aminoimidazole ribonucleotide (AIR) and HCO(3)(-) to N5-carboxyaminoimidazole ribonucleotide (N5-CAIR).</text>
</comment>
<comment type="catalytic activity">
    <reaction evidence="1">
        <text>5-amino-1-(5-phospho-beta-D-ribosyl)imidazole + hydrogencarbonate + ATP = 5-carboxyamino-1-(5-phospho-D-ribosyl)imidazole + ADP + phosphate + 2 H(+)</text>
        <dbReference type="Rhea" id="RHEA:19317"/>
        <dbReference type="ChEBI" id="CHEBI:15378"/>
        <dbReference type="ChEBI" id="CHEBI:17544"/>
        <dbReference type="ChEBI" id="CHEBI:30616"/>
        <dbReference type="ChEBI" id="CHEBI:43474"/>
        <dbReference type="ChEBI" id="CHEBI:58730"/>
        <dbReference type="ChEBI" id="CHEBI:137981"/>
        <dbReference type="ChEBI" id="CHEBI:456216"/>
        <dbReference type="EC" id="6.3.4.18"/>
    </reaction>
</comment>
<comment type="pathway">
    <text evidence="1">Purine metabolism; IMP biosynthesis via de novo pathway; 5-amino-1-(5-phospho-D-ribosyl)imidazole-4-carboxylate from 5-amino-1-(5-phospho-D-ribosyl)imidazole (N5-CAIR route): step 1/2.</text>
</comment>
<comment type="subunit">
    <text evidence="1">Homodimer.</text>
</comment>
<comment type="miscellaneous">
    <text evidence="3">Was identified as a high-confidence drug target.</text>
</comment>
<comment type="similarity">
    <text evidence="1">Belongs to the PurK/PurT family.</text>
</comment>
<accession>P9WHL9</accession>
<accession>L0TEV0</accession>
<accession>P65898</accession>
<accession>P96881</accession>
<proteinExistence type="evidence at protein level"/>
<reference key="1">
    <citation type="journal article" date="1998" name="Nature">
        <title>Deciphering the biology of Mycobacterium tuberculosis from the complete genome sequence.</title>
        <authorList>
            <person name="Cole S.T."/>
            <person name="Brosch R."/>
            <person name="Parkhill J."/>
            <person name="Garnier T."/>
            <person name="Churcher C.M."/>
            <person name="Harris D.E."/>
            <person name="Gordon S.V."/>
            <person name="Eiglmeier K."/>
            <person name="Gas S."/>
            <person name="Barry C.E. III"/>
            <person name="Tekaia F."/>
            <person name="Badcock K."/>
            <person name="Basham D."/>
            <person name="Brown D."/>
            <person name="Chillingworth T."/>
            <person name="Connor R."/>
            <person name="Davies R.M."/>
            <person name="Devlin K."/>
            <person name="Feltwell T."/>
            <person name="Gentles S."/>
            <person name="Hamlin N."/>
            <person name="Holroyd S."/>
            <person name="Hornsby T."/>
            <person name="Jagels K."/>
            <person name="Krogh A."/>
            <person name="McLean J."/>
            <person name="Moule S."/>
            <person name="Murphy L.D."/>
            <person name="Oliver S."/>
            <person name="Osborne J."/>
            <person name="Quail M.A."/>
            <person name="Rajandream M.A."/>
            <person name="Rogers J."/>
            <person name="Rutter S."/>
            <person name="Seeger K."/>
            <person name="Skelton S."/>
            <person name="Squares S."/>
            <person name="Squares R."/>
            <person name="Sulston J.E."/>
            <person name="Taylor K."/>
            <person name="Whitehead S."/>
            <person name="Barrell B.G."/>
        </authorList>
    </citation>
    <scope>NUCLEOTIDE SEQUENCE [LARGE SCALE GENOMIC DNA]</scope>
    <source>
        <strain>ATCC 25618 / H37Rv</strain>
    </source>
</reference>
<reference key="2">
    <citation type="journal article" date="2008" name="BMC Syst. Biol.">
        <title>targetTB: a target identification pipeline for Mycobacterium tuberculosis through an interactome, reactome and genome-scale structural analysis.</title>
        <authorList>
            <person name="Raman K."/>
            <person name="Yeturu K."/>
            <person name="Chandra N."/>
        </authorList>
    </citation>
    <scope>IDENTIFICATION AS A DRUG TARGET [LARGE SCALE ANALYSIS]</scope>
</reference>
<reference key="3">
    <citation type="journal article" date="2011" name="Mol. Cell. Proteomics">
        <title>Proteogenomic analysis of Mycobacterium tuberculosis by high resolution mass spectrometry.</title>
        <authorList>
            <person name="Kelkar D.S."/>
            <person name="Kumar D."/>
            <person name="Kumar P."/>
            <person name="Balakrishnan L."/>
            <person name="Muthusamy B."/>
            <person name="Yadav A.K."/>
            <person name="Shrivastava P."/>
            <person name="Marimuthu A."/>
            <person name="Anand S."/>
            <person name="Sundaram H."/>
            <person name="Kingsbury R."/>
            <person name="Harsha H.C."/>
            <person name="Nair B."/>
            <person name="Prasad T.S."/>
            <person name="Chauhan D.S."/>
            <person name="Katoch K."/>
            <person name="Katoch V.M."/>
            <person name="Kumar P."/>
            <person name="Chaerkady R."/>
            <person name="Ramachandran S."/>
            <person name="Dash D."/>
            <person name="Pandey A."/>
        </authorList>
    </citation>
    <scope>IDENTIFICATION BY MASS SPECTROMETRY [LARGE SCALE ANALYSIS]</scope>
    <source>
        <strain>ATCC 25618 / H37Rv</strain>
    </source>
</reference>
<protein>
    <recommendedName>
        <fullName evidence="1">N5-carboxyaminoimidazole ribonucleotide synthase</fullName>
        <shortName evidence="1">N5-CAIR synthase</shortName>
        <ecNumber evidence="1">6.3.4.18</ecNumber>
    </recommendedName>
    <alternativeName>
        <fullName evidence="1">5-(carboxyamino)imidazole ribonucleotide synthetase</fullName>
    </alternativeName>
</protein>
<keyword id="KW-0067">ATP-binding</keyword>
<keyword id="KW-0436">Ligase</keyword>
<keyword id="KW-0547">Nucleotide-binding</keyword>
<keyword id="KW-0658">Purine biosynthesis</keyword>
<keyword id="KW-1185">Reference proteome</keyword>
<gene>
    <name evidence="1" type="primary">purK</name>
    <name type="ordered locus">Rv3276c</name>
    <name type="ORF">MTCY71.16c</name>
</gene>
<sequence>MMAVASSRTPAVTSFIAPLVAMVGGGQLARMTHQAAIALGQNLRVLVTSADDPAAQVTPNVVIGSHTDLAALRRVAAGADVLTFDHEHVPNELLEKLVADGVNVAPSPQALVHAQDKLVMRQRLAAAGVAVPRYAGIKDPDEIDVFAARVDAPIVVKAVRGGYDGRGVRMARDVADARDFARECLADGVAVLVEERVDLRRELSALVARSPFGQGAAWPVVQTVQRDGTCVLVIAPAPALPDDLATAAQRLALQLADELGVVGVLAVELFETTDGALLVNELAMRPHNSGHWTIDGARTSQFEQHLRAVLDYPLGDSDAVVPVTVMANVLGAAQPPAMSVDERLHHLFARMPDARVHLYGKAERPGRKVGHINFLGSDVAQLCERAELAAHWLSHGRWTDGWDPHRASDDAVGVPPACGGRSDEEERRL</sequence>